<keyword id="KW-0456">Lyase</keyword>
<feature type="chain" id="PRO_0000178651" description="Methylglyoxal synthase">
    <location>
        <begin position="1"/>
        <end position="158"/>
    </location>
</feature>
<feature type="domain" description="MGS-like" evidence="1">
    <location>
        <begin position="1"/>
        <end position="158"/>
    </location>
</feature>
<feature type="active site" description="Proton donor/acceptor" evidence="1">
    <location>
        <position position="69"/>
    </location>
</feature>
<feature type="binding site" evidence="1">
    <location>
        <position position="12"/>
    </location>
    <ligand>
        <name>substrate</name>
    </ligand>
</feature>
<feature type="binding site" evidence="1">
    <location>
        <position position="16"/>
    </location>
    <ligand>
        <name>substrate</name>
    </ligand>
</feature>
<feature type="binding site" evidence="1">
    <location>
        <begin position="38"/>
        <end position="41"/>
    </location>
    <ligand>
        <name>substrate</name>
    </ligand>
</feature>
<feature type="binding site" evidence="1">
    <location>
        <begin position="63"/>
        <end position="64"/>
    </location>
    <ligand>
        <name>substrate</name>
    </ligand>
</feature>
<feature type="binding site" evidence="1">
    <location>
        <position position="96"/>
    </location>
    <ligand>
        <name>substrate</name>
    </ligand>
</feature>
<sequence length="158" mass="17877">MRRKLRIALVAHDNRKADIVDWALNNAEMLSQHRLFGTGTTGTLVRESFMKRGIASDITCMHSGPMGGDAEIAALVVRKEIDFAVFFIDDLNPQPHEADIQMLLRQCRIHNIPIACNRYSADLMITSSLWDDAGYVPKDPIYAPFDRKAFEESLKVKE</sequence>
<comment type="function">
    <text evidence="1">Catalyzes the formation of methylglyoxal from dihydroxyacetone phosphate.</text>
</comment>
<comment type="catalytic activity">
    <reaction evidence="1">
        <text>dihydroxyacetone phosphate = methylglyoxal + phosphate</text>
        <dbReference type="Rhea" id="RHEA:17937"/>
        <dbReference type="ChEBI" id="CHEBI:17158"/>
        <dbReference type="ChEBI" id="CHEBI:43474"/>
        <dbReference type="ChEBI" id="CHEBI:57642"/>
        <dbReference type="EC" id="4.2.3.3"/>
    </reaction>
</comment>
<comment type="similarity">
    <text evidence="1">Belongs to the methylglyoxal synthase family.</text>
</comment>
<evidence type="ECO:0000255" key="1">
    <source>
        <dbReference type="HAMAP-Rule" id="MF_00549"/>
    </source>
</evidence>
<gene>
    <name evidence="1" type="primary">mgsA</name>
</gene>
<organism>
    <name type="scientific">Treponema socranskii</name>
    <dbReference type="NCBI Taxonomy" id="53419"/>
    <lineage>
        <taxon>Bacteria</taxon>
        <taxon>Pseudomonadati</taxon>
        <taxon>Spirochaetota</taxon>
        <taxon>Spirochaetia</taxon>
        <taxon>Spirochaetales</taxon>
        <taxon>Treponemataceae</taxon>
        <taxon>Treponema</taxon>
    </lineage>
</organism>
<reference key="1">
    <citation type="journal article" date="2001" name="FEMS Microbiol. Lett.">
        <title>Proteolytic activity among various oral Treponema species and cloning of a prtP-like gene of Treponema socranskii subsp. socranskii.</title>
        <authorList>
            <person name="Heuner K."/>
            <person name="Bergmann I."/>
            <person name="Heckenbach K."/>
            <person name="Goebel U.B."/>
        </authorList>
    </citation>
    <scope>NUCLEOTIDE SEQUENCE [GENOMIC DNA]</scope>
    <source>
        <strain>ATCC 35536 / JCM 8157 / VPI DR56BRIII6</strain>
    </source>
</reference>
<proteinExistence type="inferred from homology"/>
<protein>
    <recommendedName>
        <fullName evidence="1">Methylglyoxal synthase</fullName>
        <shortName evidence="1">MGS</shortName>
        <ecNumber evidence="1">4.2.3.3</ecNumber>
    </recommendedName>
</protein>
<name>MGSA_TRESO</name>
<dbReference type="EC" id="4.2.3.3" evidence="1"/>
<dbReference type="EMBL" id="AJ272337">
    <property type="protein sequence ID" value="CAC81260.1"/>
    <property type="molecule type" value="Genomic_DNA"/>
</dbReference>
<dbReference type="SMR" id="P58761"/>
<dbReference type="GO" id="GO:0005829">
    <property type="term" value="C:cytosol"/>
    <property type="evidence" value="ECO:0007669"/>
    <property type="project" value="TreeGrafter"/>
</dbReference>
<dbReference type="GO" id="GO:0008929">
    <property type="term" value="F:methylglyoxal synthase activity"/>
    <property type="evidence" value="ECO:0007669"/>
    <property type="project" value="UniProtKB-UniRule"/>
</dbReference>
<dbReference type="GO" id="GO:0019242">
    <property type="term" value="P:methylglyoxal biosynthetic process"/>
    <property type="evidence" value="ECO:0007669"/>
    <property type="project" value="UniProtKB-UniRule"/>
</dbReference>
<dbReference type="CDD" id="cd01422">
    <property type="entry name" value="MGS"/>
    <property type="match status" value="1"/>
</dbReference>
<dbReference type="Gene3D" id="3.40.50.1380">
    <property type="entry name" value="Methylglyoxal synthase-like domain"/>
    <property type="match status" value="1"/>
</dbReference>
<dbReference type="HAMAP" id="MF_00549">
    <property type="entry name" value="Methylglyoxal_synth"/>
    <property type="match status" value="1"/>
</dbReference>
<dbReference type="InterPro" id="IPR004363">
    <property type="entry name" value="Methylgl_synth"/>
</dbReference>
<dbReference type="InterPro" id="IPR011607">
    <property type="entry name" value="MGS-like_dom"/>
</dbReference>
<dbReference type="InterPro" id="IPR036914">
    <property type="entry name" value="MGS-like_dom_sf"/>
</dbReference>
<dbReference type="NCBIfam" id="NF003559">
    <property type="entry name" value="PRK05234.1"/>
    <property type="match status" value="1"/>
</dbReference>
<dbReference type="PANTHER" id="PTHR30492">
    <property type="entry name" value="METHYLGLYOXAL SYNTHASE"/>
    <property type="match status" value="1"/>
</dbReference>
<dbReference type="PANTHER" id="PTHR30492:SF0">
    <property type="entry name" value="METHYLGLYOXAL SYNTHASE"/>
    <property type="match status" value="1"/>
</dbReference>
<dbReference type="Pfam" id="PF02142">
    <property type="entry name" value="MGS"/>
    <property type="match status" value="1"/>
</dbReference>
<dbReference type="PIRSF" id="PIRSF006614">
    <property type="entry name" value="Methylglyox_syn"/>
    <property type="match status" value="1"/>
</dbReference>
<dbReference type="SMART" id="SM00851">
    <property type="entry name" value="MGS"/>
    <property type="match status" value="1"/>
</dbReference>
<dbReference type="SUPFAM" id="SSF52335">
    <property type="entry name" value="Methylglyoxal synthase-like"/>
    <property type="match status" value="1"/>
</dbReference>
<dbReference type="PROSITE" id="PS51855">
    <property type="entry name" value="MGS"/>
    <property type="match status" value="1"/>
</dbReference>
<accession>P58761</accession>